<accession>P61636</accession>
<accession>O33585</accession>
<proteinExistence type="inferred from homology"/>
<reference key="1">
    <citation type="journal article" date="2001" name="Lancet">
        <title>Whole genome sequencing of meticillin-resistant Staphylococcus aureus.</title>
        <authorList>
            <person name="Kuroda M."/>
            <person name="Ohta T."/>
            <person name="Uchiyama I."/>
            <person name="Baba T."/>
            <person name="Yuzawa H."/>
            <person name="Kobayashi I."/>
            <person name="Cui L."/>
            <person name="Oguchi A."/>
            <person name="Aoki K."/>
            <person name="Nagai Y."/>
            <person name="Lian J.-Q."/>
            <person name="Ito T."/>
            <person name="Kanamori M."/>
            <person name="Matsumaru H."/>
            <person name="Maruyama A."/>
            <person name="Murakami H."/>
            <person name="Hosoyama A."/>
            <person name="Mizutani-Ui Y."/>
            <person name="Takahashi N.K."/>
            <person name="Sawano T."/>
            <person name="Inoue R."/>
            <person name="Kaito C."/>
            <person name="Sekimizu K."/>
            <person name="Hirakawa H."/>
            <person name="Kuhara S."/>
            <person name="Goto S."/>
            <person name="Yabuzaki J."/>
            <person name="Kanehisa M."/>
            <person name="Yamashita A."/>
            <person name="Oshima K."/>
            <person name="Furuya K."/>
            <person name="Yoshino C."/>
            <person name="Shiba T."/>
            <person name="Hattori M."/>
            <person name="Ogasawara N."/>
            <person name="Hayashi H."/>
            <person name="Hiramatsu K."/>
        </authorList>
    </citation>
    <scope>NUCLEOTIDE SEQUENCE [LARGE SCALE GENOMIC DNA]</scope>
    <source>
        <strain>Mu50 / ATCC 700699</strain>
    </source>
</reference>
<comment type="function">
    <text evidence="1">Essential for the production of a quorum sensing system signal molecule, the autoinducing peptide (AIP). This quorum sensing system is responsible for the regulation of the expression of virulence factor genes. Involved in the proteolytic processing of AgrD, the precursor of AIP.</text>
</comment>
<comment type="subcellular location">
    <subcellularLocation>
        <location evidence="1">Cell membrane</location>
        <topology evidence="1">Multi-pass membrane protein</topology>
    </subcellularLocation>
</comment>
<comment type="similarity">
    <text evidence="1">Belongs to the AgrB family.</text>
</comment>
<feature type="chain" id="PRO_0000168120" description="Accessory gene regulator protein B">
    <location>
        <begin position="1"/>
        <end position="187"/>
    </location>
</feature>
<feature type="transmembrane region" description="Helical" evidence="1">
    <location>
        <begin position="49"/>
        <end position="69"/>
    </location>
</feature>
<feature type="transmembrane region" description="Helical" evidence="1">
    <location>
        <begin position="82"/>
        <end position="102"/>
    </location>
</feature>
<feature type="transmembrane region" description="Helical" evidence="1">
    <location>
        <begin position="106"/>
        <end position="126"/>
    </location>
</feature>
<feature type="transmembrane region" description="Helical" evidence="1">
    <location>
        <begin position="144"/>
        <end position="164"/>
    </location>
</feature>
<feature type="transmembrane region" description="Helical" evidence="1">
    <location>
        <begin position="166"/>
        <end position="186"/>
    </location>
</feature>
<gene>
    <name evidence="1" type="primary">agrB</name>
    <name type="ordered locus">SAV2036</name>
</gene>
<dbReference type="EC" id="3.4.-.-" evidence="1"/>
<dbReference type="EMBL" id="BA000017">
    <property type="protein sequence ID" value="BAB58198.1"/>
    <property type="molecule type" value="Genomic_DNA"/>
</dbReference>
<dbReference type="RefSeq" id="WP_001105696.1">
    <property type="nucleotide sequence ID" value="NC_002758.2"/>
</dbReference>
<dbReference type="MEROPS" id="C75.001"/>
<dbReference type="KEGG" id="sav:SAV2036"/>
<dbReference type="HOGENOM" id="CLU_098969_2_2_9"/>
<dbReference type="PhylomeDB" id="P61636"/>
<dbReference type="Proteomes" id="UP000002481">
    <property type="component" value="Chromosome"/>
</dbReference>
<dbReference type="GO" id="GO:0005886">
    <property type="term" value="C:plasma membrane"/>
    <property type="evidence" value="ECO:0007669"/>
    <property type="project" value="UniProtKB-SubCell"/>
</dbReference>
<dbReference type="GO" id="GO:0008233">
    <property type="term" value="F:peptidase activity"/>
    <property type="evidence" value="ECO:0007669"/>
    <property type="project" value="UniProtKB-UniRule"/>
</dbReference>
<dbReference type="GO" id="GO:0006508">
    <property type="term" value="P:proteolysis"/>
    <property type="evidence" value="ECO:0007669"/>
    <property type="project" value="UniProtKB-KW"/>
</dbReference>
<dbReference type="GO" id="GO:0009372">
    <property type="term" value="P:quorum sensing"/>
    <property type="evidence" value="ECO:0007669"/>
    <property type="project" value="UniProtKB-UniRule"/>
</dbReference>
<dbReference type="HAMAP" id="MF_00784">
    <property type="entry name" value="AgrB"/>
    <property type="match status" value="1"/>
</dbReference>
<dbReference type="InterPro" id="IPR006741">
    <property type="entry name" value="AgrB"/>
</dbReference>
<dbReference type="Pfam" id="PF04647">
    <property type="entry name" value="AgrB"/>
    <property type="match status" value="1"/>
</dbReference>
<dbReference type="SMART" id="SM00793">
    <property type="entry name" value="AgrB"/>
    <property type="match status" value="1"/>
</dbReference>
<organism>
    <name type="scientific">Staphylococcus aureus (strain Mu50 / ATCC 700699)</name>
    <dbReference type="NCBI Taxonomy" id="158878"/>
    <lineage>
        <taxon>Bacteria</taxon>
        <taxon>Bacillati</taxon>
        <taxon>Bacillota</taxon>
        <taxon>Bacilli</taxon>
        <taxon>Bacillales</taxon>
        <taxon>Staphylococcaceae</taxon>
        <taxon>Staphylococcus</taxon>
    </lineage>
</organism>
<name>AGRB_STAAM</name>
<evidence type="ECO:0000255" key="1">
    <source>
        <dbReference type="HAMAP-Rule" id="MF_00784"/>
    </source>
</evidence>
<sequence>MNYFDNKIDQFATYLQKRNNLDHIQFLQVRLGMQIIVGNFFKILVTYSISIFLSVFLFTLVTHLSYMLIRYNAHGAHAKSSILCYIQSILTFVFVPYFLINIDINFTYLLALSIIGLISVVIYAPAATKKQPIPIKLVKRKKYLSIIMYLLVLILSLIIHPFYAQFMLLGILVESITLLPIFFPKED</sequence>
<keyword id="KW-1003">Cell membrane</keyword>
<keyword id="KW-0378">Hydrolase</keyword>
<keyword id="KW-0472">Membrane</keyword>
<keyword id="KW-0645">Protease</keyword>
<keyword id="KW-0673">Quorum sensing</keyword>
<keyword id="KW-0812">Transmembrane</keyword>
<keyword id="KW-1133">Transmembrane helix</keyword>
<keyword id="KW-0843">Virulence</keyword>
<protein>
    <recommendedName>
        <fullName evidence="1">Accessory gene regulator protein B</fullName>
        <ecNumber evidence="1">3.4.-.-</ecNumber>
    </recommendedName>
</protein>